<protein>
    <recommendedName>
        <fullName evidence="1">Ribosome maturation factor RimP</fullName>
    </recommendedName>
</protein>
<sequence>MSTTQSERLRELLEPLVASQGLDLEEIAVDSVGRRRVLSVVVDSDTGADLDRIADVSRALSAKLDETDAMGEGEYTLEVGTPGAERSLTQHRHYVRATDRLVRFQLREGGELVARILAVDEDGLDLEVPGVKGRRPTTRRLPFGDIDKARVQVEFNRKDTKNDNQTEHDNKTEEEEA</sequence>
<organism>
    <name type="scientific">Streptomyces coelicolor (strain ATCC BAA-471 / A3(2) / M145)</name>
    <dbReference type="NCBI Taxonomy" id="100226"/>
    <lineage>
        <taxon>Bacteria</taxon>
        <taxon>Bacillati</taxon>
        <taxon>Actinomycetota</taxon>
        <taxon>Actinomycetes</taxon>
        <taxon>Kitasatosporales</taxon>
        <taxon>Streptomycetaceae</taxon>
        <taxon>Streptomyces</taxon>
        <taxon>Streptomyces albidoflavus group</taxon>
    </lineage>
</organism>
<dbReference type="EMBL" id="AL939124">
    <property type="protein sequence ID" value="CAB91139.1"/>
    <property type="molecule type" value="Genomic_DNA"/>
</dbReference>
<dbReference type="RefSeq" id="NP_629831.1">
    <property type="nucleotide sequence ID" value="NC_003888.3"/>
</dbReference>
<dbReference type="RefSeq" id="WP_003973323.1">
    <property type="nucleotide sequence ID" value="NZ_VNID01000024.1"/>
</dbReference>
<dbReference type="SMR" id="Q9KYR2"/>
<dbReference type="FunCoup" id="Q9KYR2">
    <property type="interactions" value="25"/>
</dbReference>
<dbReference type="STRING" id="100226.gene:17763359"/>
<dbReference type="PaxDb" id="100226-SCO5703"/>
<dbReference type="GeneID" id="91383354"/>
<dbReference type="KEGG" id="sco:SCO5703"/>
<dbReference type="PATRIC" id="fig|100226.15.peg.5792"/>
<dbReference type="eggNOG" id="COG0779">
    <property type="taxonomic scope" value="Bacteria"/>
</dbReference>
<dbReference type="HOGENOM" id="CLU_070525_3_0_11"/>
<dbReference type="InParanoid" id="Q9KYR2"/>
<dbReference type="OrthoDB" id="9805006at2"/>
<dbReference type="PhylomeDB" id="Q9KYR2"/>
<dbReference type="Proteomes" id="UP000001973">
    <property type="component" value="Chromosome"/>
</dbReference>
<dbReference type="GO" id="GO:0005829">
    <property type="term" value="C:cytosol"/>
    <property type="evidence" value="ECO:0000318"/>
    <property type="project" value="GO_Central"/>
</dbReference>
<dbReference type="GO" id="GO:0000028">
    <property type="term" value="P:ribosomal small subunit assembly"/>
    <property type="evidence" value="ECO:0000318"/>
    <property type="project" value="GO_Central"/>
</dbReference>
<dbReference type="GO" id="GO:0006412">
    <property type="term" value="P:translation"/>
    <property type="evidence" value="ECO:0000318"/>
    <property type="project" value="GO_Central"/>
</dbReference>
<dbReference type="CDD" id="cd01734">
    <property type="entry name" value="YlxS_C"/>
    <property type="match status" value="1"/>
</dbReference>
<dbReference type="FunFam" id="3.30.300.70:FF:000002">
    <property type="entry name" value="Ribosome maturation factor RimP"/>
    <property type="match status" value="1"/>
</dbReference>
<dbReference type="Gene3D" id="3.30.300.70">
    <property type="entry name" value="RimP-like superfamily, N-terminal"/>
    <property type="match status" value="1"/>
</dbReference>
<dbReference type="HAMAP" id="MF_01077">
    <property type="entry name" value="RimP"/>
    <property type="match status" value="1"/>
</dbReference>
<dbReference type="InterPro" id="IPR003728">
    <property type="entry name" value="Ribosome_maturation_RimP"/>
</dbReference>
<dbReference type="InterPro" id="IPR028998">
    <property type="entry name" value="RimP_C"/>
</dbReference>
<dbReference type="InterPro" id="IPR028989">
    <property type="entry name" value="RimP_N"/>
</dbReference>
<dbReference type="InterPro" id="IPR035956">
    <property type="entry name" value="RimP_N_sf"/>
</dbReference>
<dbReference type="NCBIfam" id="NF000930">
    <property type="entry name" value="PRK00092.2-2"/>
    <property type="match status" value="1"/>
</dbReference>
<dbReference type="PANTHER" id="PTHR33867">
    <property type="entry name" value="RIBOSOME MATURATION FACTOR RIMP"/>
    <property type="match status" value="1"/>
</dbReference>
<dbReference type="PANTHER" id="PTHR33867:SF1">
    <property type="entry name" value="RIBOSOME MATURATION FACTOR RIMP"/>
    <property type="match status" value="1"/>
</dbReference>
<dbReference type="Pfam" id="PF17384">
    <property type="entry name" value="DUF150_C"/>
    <property type="match status" value="1"/>
</dbReference>
<dbReference type="Pfam" id="PF02576">
    <property type="entry name" value="RimP_N"/>
    <property type="match status" value="1"/>
</dbReference>
<dbReference type="SUPFAM" id="SSF75420">
    <property type="entry name" value="YhbC-like, N-terminal domain"/>
    <property type="match status" value="1"/>
</dbReference>
<name>RIMP_STRCO</name>
<comment type="function">
    <text evidence="1">Required for maturation of 30S ribosomal subunits.</text>
</comment>
<comment type="subcellular location">
    <subcellularLocation>
        <location evidence="1">Cytoplasm</location>
    </subcellularLocation>
</comment>
<comment type="similarity">
    <text evidence="1">Belongs to the RimP family.</text>
</comment>
<evidence type="ECO:0000255" key="1">
    <source>
        <dbReference type="HAMAP-Rule" id="MF_01077"/>
    </source>
</evidence>
<evidence type="ECO:0000256" key="2">
    <source>
        <dbReference type="SAM" id="MobiDB-lite"/>
    </source>
</evidence>
<proteinExistence type="inferred from homology"/>
<gene>
    <name evidence="1" type="primary">rimP</name>
    <name type="ordered locus">SCO5703</name>
    <name type="ORF">SC5H4.27</name>
</gene>
<accession>Q9KYR2</accession>
<keyword id="KW-0963">Cytoplasm</keyword>
<keyword id="KW-1185">Reference proteome</keyword>
<keyword id="KW-0690">Ribosome biogenesis</keyword>
<feature type="chain" id="PRO_0000181932" description="Ribosome maturation factor RimP">
    <location>
        <begin position="1"/>
        <end position="177"/>
    </location>
</feature>
<feature type="region of interest" description="Disordered" evidence="2">
    <location>
        <begin position="153"/>
        <end position="177"/>
    </location>
</feature>
<feature type="compositionally biased region" description="Basic and acidic residues" evidence="2">
    <location>
        <begin position="153"/>
        <end position="171"/>
    </location>
</feature>
<reference key="1">
    <citation type="journal article" date="2002" name="Nature">
        <title>Complete genome sequence of the model actinomycete Streptomyces coelicolor A3(2).</title>
        <authorList>
            <person name="Bentley S.D."/>
            <person name="Chater K.F."/>
            <person name="Cerdeno-Tarraga A.-M."/>
            <person name="Challis G.L."/>
            <person name="Thomson N.R."/>
            <person name="James K.D."/>
            <person name="Harris D.E."/>
            <person name="Quail M.A."/>
            <person name="Kieser H."/>
            <person name="Harper D."/>
            <person name="Bateman A."/>
            <person name="Brown S."/>
            <person name="Chandra G."/>
            <person name="Chen C.W."/>
            <person name="Collins M."/>
            <person name="Cronin A."/>
            <person name="Fraser A."/>
            <person name="Goble A."/>
            <person name="Hidalgo J."/>
            <person name="Hornsby T."/>
            <person name="Howarth S."/>
            <person name="Huang C.-H."/>
            <person name="Kieser T."/>
            <person name="Larke L."/>
            <person name="Murphy L.D."/>
            <person name="Oliver K."/>
            <person name="O'Neil S."/>
            <person name="Rabbinowitsch E."/>
            <person name="Rajandream M.A."/>
            <person name="Rutherford K.M."/>
            <person name="Rutter S."/>
            <person name="Seeger K."/>
            <person name="Saunders D."/>
            <person name="Sharp S."/>
            <person name="Squares R."/>
            <person name="Squares S."/>
            <person name="Taylor K."/>
            <person name="Warren T."/>
            <person name="Wietzorrek A."/>
            <person name="Woodward J.R."/>
            <person name="Barrell B.G."/>
            <person name="Parkhill J."/>
            <person name="Hopwood D.A."/>
        </authorList>
    </citation>
    <scope>NUCLEOTIDE SEQUENCE [LARGE SCALE GENOMIC DNA]</scope>
    <source>
        <strain>ATCC BAA-471 / A3(2) / M145</strain>
    </source>
</reference>